<gene>
    <name evidence="2" type="primary">NDUFV2</name>
</gene>
<accession>Q0MQI7</accession>
<name>NDUV2_PONPY</name>
<sequence length="249" mass="27354">MFFSAALRARAAGLTAQWGRHVRNLHKTAMQNGAGGALFVHRDTPENNPDTPFDFTPENYKRIEAIVKNYPEGHKAAAVLPVLDLAQRQNGWLPISAMNKVAEVLQVPPMRVYEVATFYTMYNRKPVGKYHIQVCTTTPCMLRNSDSILEAIQKKLGIKVGETTPDKLFTLIEVECLGACVNAPMVQINDNYYEDLTAKDIEEIIDELKAGKIPKPGPRSGRFSCEPAGGLTSLTEPPKGPGFGVQAGL</sequence>
<proteinExistence type="evidence at transcript level"/>
<evidence type="ECO:0000250" key="1">
    <source>
        <dbReference type="UniProtKB" id="P04394"/>
    </source>
</evidence>
<evidence type="ECO:0000250" key="2">
    <source>
        <dbReference type="UniProtKB" id="P19404"/>
    </source>
</evidence>
<evidence type="ECO:0000250" key="3">
    <source>
        <dbReference type="UniProtKB" id="Q9D6J6"/>
    </source>
</evidence>
<evidence type="ECO:0000255" key="4"/>
<evidence type="ECO:0000256" key="5">
    <source>
        <dbReference type="SAM" id="MobiDB-lite"/>
    </source>
</evidence>
<evidence type="ECO:0000305" key="6"/>
<organism>
    <name type="scientific">Pongo pygmaeus</name>
    <name type="common">Bornean orangutan</name>
    <dbReference type="NCBI Taxonomy" id="9600"/>
    <lineage>
        <taxon>Eukaryota</taxon>
        <taxon>Metazoa</taxon>
        <taxon>Chordata</taxon>
        <taxon>Craniata</taxon>
        <taxon>Vertebrata</taxon>
        <taxon>Euteleostomi</taxon>
        <taxon>Mammalia</taxon>
        <taxon>Eutheria</taxon>
        <taxon>Euarchontoglires</taxon>
        <taxon>Primates</taxon>
        <taxon>Haplorrhini</taxon>
        <taxon>Catarrhini</taxon>
        <taxon>Hominidae</taxon>
        <taxon>Pongo</taxon>
    </lineage>
</organism>
<dbReference type="EC" id="7.1.1.2" evidence="2"/>
<dbReference type="EMBL" id="DQ885647">
    <property type="protein sequence ID" value="ABH12156.1"/>
    <property type="molecule type" value="mRNA"/>
</dbReference>
<dbReference type="SMR" id="Q0MQI7"/>
<dbReference type="GO" id="GO:0005743">
    <property type="term" value="C:mitochondrial inner membrane"/>
    <property type="evidence" value="ECO:0000250"/>
    <property type="project" value="UniProtKB"/>
</dbReference>
<dbReference type="GO" id="GO:0045271">
    <property type="term" value="C:respiratory chain complex I"/>
    <property type="evidence" value="ECO:0000250"/>
    <property type="project" value="UniProtKB"/>
</dbReference>
<dbReference type="GO" id="GO:0051537">
    <property type="term" value="F:2 iron, 2 sulfur cluster binding"/>
    <property type="evidence" value="ECO:0007669"/>
    <property type="project" value="UniProtKB-KW"/>
</dbReference>
<dbReference type="GO" id="GO:0046872">
    <property type="term" value="F:metal ion binding"/>
    <property type="evidence" value="ECO:0007669"/>
    <property type="project" value="UniProtKB-KW"/>
</dbReference>
<dbReference type="GO" id="GO:0008137">
    <property type="term" value="F:NADH dehydrogenase (ubiquinone) activity"/>
    <property type="evidence" value="ECO:0000250"/>
    <property type="project" value="UniProtKB"/>
</dbReference>
<dbReference type="GO" id="GO:0006120">
    <property type="term" value="P:mitochondrial electron transport, NADH to ubiquinone"/>
    <property type="evidence" value="ECO:0000250"/>
    <property type="project" value="UniProtKB"/>
</dbReference>
<dbReference type="CDD" id="cd03064">
    <property type="entry name" value="TRX_Fd_NuoE"/>
    <property type="match status" value="1"/>
</dbReference>
<dbReference type="FunFam" id="3.40.30.10:FF:000022">
    <property type="entry name" value="NADH dehydrogenase flavoprotein 2, mitochondrial"/>
    <property type="match status" value="1"/>
</dbReference>
<dbReference type="FunFam" id="1.10.10.1590:FF:000001">
    <property type="entry name" value="NADH-quinone oxidoreductase subunit E"/>
    <property type="match status" value="1"/>
</dbReference>
<dbReference type="Gene3D" id="3.40.30.10">
    <property type="entry name" value="Glutaredoxin"/>
    <property type="match status" value="1"/>
</dbReference>
<dbReference type="Gene3D" id="1.10.10.1590">
    <property type="entry name" value="NADH-quinone oxidoreductase subunit E"/>
    <property type="match status" value="1"/>
</dbReference>
<dbReference type="InterPro" id="IPR002023">
    <property type="entry name" value="NuoE-like"/>
</dbReference>
<dbReference type="InterPro" id="IPR042128">
    <property type="entry name" value="NuoE_dom"/>
</dbReference>
<dbReference type="InterPro" id="IPR041921">
    <property type="entry name" value="NuoE_N"/>
</dbReference>
<dbReference type="InterPro" id="IPR036249">
    <property type="entry name" value="Thioredoxin-like_sf"/>
</dbReference>
<dbReference type="NCBIfam" id="TIGR01958">
    <property type="entry name" value="nuoE_fam"/>
    <property type="match status" value="1"/>
</dbReference>
<dbReference type="NCBIfam" id="NF005722">
    <property type="entry name" value="PRK07539.1-2"/>
    <property type="match status" value="1"/>
</dbReference>
<dbReference type="NCBIfam" id="NF005725">
    <property type="entry name" value="PRK07539.1-5"/>
    <property type="match status" value="1"/>
</dbReference>
<dbReference type="PANTHER" id="PTHR10371:SF3">
    <property type="entry name" value="NADH DEHYDROGENASE [UBIQUINONE] FLAVOPROTEIN 2, MITOCHONDRIAL"/>
    <property type="match status" value="1"/>
</dbReference>
<dbReference type="PANTHER" id="PTHR10371">
    <property type="entry name" value="NADH DEHYDROGENASE UBIQUINONE FLAVOPROTEIN 2, MITOCHONDRIAL"/>
    <property type="match status" value="1"/>
</dbReference>
<dbReference type="Pfam" id="PF01257">
    <property type="entry name" value="2Fe-2S_thioredx"/>
    <property type="match status" value="1"/>
</dbReference>
<dbReference type="PIRSF" id="PIRSF000216">
    <property type="entry name" value="NADH_DH_24kDa"/>
    <property type="match status" value="1"/>
</dbReference>
<dbReference type="SUPFAM" id="SSF52833">
    <property type="entry name" value="Thioredoxin-like"/>
    <property type="match status" value="1"/>
</dbReference>
<dbReference type="PROSITE" id="PS01099">
    <property type="entry name" value="COMPLEX1_24K"/>
    <property type="match status" value="1"/>
</dbReference>
<keyword id="KW-0001">2Fe-2S</keyword>
<keyword id="KW-0007">Acetylation</keyword>
<keyword id="KW-0249">Electron transport</keyword>
<keyword id="KW-0408">Iron</keyword>
<keyword id="KW-0411">Iron-sulfur</keyword>
<keyword id="KW-0472">Membrane</keyword>
<keyword id="KW-0479">Metal-binding</keyword>
<keyword id="KW-0496">Mitochondrion</keyword>
<keyword id="KW-0999">Mitochondrion inner membrane</keyword>
<keyword id="KW-0520">NAD</keyword>
<keyword id="KW-0560">Oxidoreductase</keyword>
<keyword id="KW-0597">Phosphoprotein</keyword>
<keyword id="KW-0679">Respiratory chain</keyword>
<keyword id="KW-0809">Transit peptide</keyword>
<keyword id="KW-1278">Translocase</keyword>
<keyword id="KW-0813">Transport</keyword>
<keyword id="KW-0830">Ubiquinone</keyword>
<feature type="transit peptide" description="Mitochondrion" evidence="4">
    <location>
        <begin position="1"/>
        <end position="32"/>
    </location>
</feature>
<feature type="chain" id="PRO_0000251881" description="NADH dehydrogenase [ubiquinone] flavoprotein 2, mitochondrial">
    <location>
        <begin position="33"/>
        <end position="249"/>
    </location>
</feature>
<feature type="region of interest" description="Disordered" evidence="5">
    <location>
        <begin position="213"/>
        <end position="249"/>
    </location>
</feature>
<feature type="binding site" evidence="1">
    <location>
        <position position="135"/>
    </location>
    <ligand>
        <name>[2Fe-2S] cluster</name>
        <dbReference type="ChEBI" id="CHEBI:190135"/>
    </ligand>
</feature>
<feature type="binding site" evidence="1">
    <location>
        <position position="140"/>
    </location>
    <ligand>
        <name>[2Fe-2S] cluster</name>
        <dbReference type="ChEBI" id="CHEBI:190135"/>
    </ligand>
</feature>
<feature type="binding site" evidence="2">
    <location>
        <position position="176"/>
    </location>
    <ligand>
        <name>[2Fe-2S] cluster</name>
        <dbReference type="ChEBI" id="CHEBI:190135"/>
    </ligand>
</feature>
<feature type="binding site" evidence="2">
    <location>
        <position position="180"/>
    </location>
    <ligand>
        <name>[2Fe-2S] cluster</name>
        <dbReference type="ChEBI" id="CHEBI:190135"/>
    </ligand>
</feature>
<feature type="modified residue" description="N6-acetyllysine" evidence="3">
    <location>
        <position position="61"/>
    </location>
</feature>
<feature type="modified residue" description="Phosphotyrosine; by SRC" evidence="2">
    <location>
        <position position="193"/>
    </location>
</feature>
<reference key="1">
    <citation type="journal article" date="2006" name="Gene">
        <title>Adaptive selection of mitochondrial complex I subunits during primate radiation.</title>
        <authorList>
            <person name="Mishmar D."/>
            <person name="Ruiz-Pesini E."/>
            <person name="Mondragon-Palomino M."/>
            <person name="Procaccio V."/>
            <person name="Gaut B."/>
            <person name="Wallace D.C."/>
        </authorList>
    </citation>
    <scope>NUCLEOTIDE SEQUENCE [MRNA]</scope>
</reference>
<protein>
    <recommendedName>
        <fullName evidence="2">NADH dehydrogenase [ubiquinone] flavoprotein 2, mitochondrial</fullName>
        <ecNumber evidence="2">7.1.1.2</ecNumber>
    </recommendedName>
    <alternativeName>
        <fullName>NADH-ubiquinone oxidoreductase 24 kDa subunit</fullName>
    </alternativeName>
</protein>
<comment type="function">
    <text evidence="2">Core subunit of the mitochondrial membrane respiratory chain NADH dehydrogenase (Complex I) which catalyzes electron transfer from NADH through the respiratory chain, using ubiquinone as an electron acceptor. Parts of the peripheral arm of the enzyme, where the electrons from NADH are accepted by flavin mononucleotide (FMN) and then passed along a chain of iron-sulfur clusters by electron tunnelling to the final acceptor ubiquinone. Contains one iron-sulfur cluster.</text>
</comment>
<comment type="catalytic activity">
    <reaction evidence="2">
        <text>a ubiquinone + NADH + 5 H(+)(in) = a ubiquinol + NAD(+) + 4 H(+)(out)</text>
        <dbReference type="Rhea" id="RHEA:29091"/>
        <dbReference type="Rhea" id="RHEA-COMP:9565"/>
        <dbReference type="Rhea" id="RHEA-COMP:9566"/>
        <dbReference type="ChEBI" id="CHEBI:15378"/>
        <dbReference type="ChEBI" id="CHEBI:16389"/>
        <dbReference type="ChEBI" id="CHEBI:17976"/>
        <dbReference type="ChEBI" id="CHEBI:57540"/>
        <dbReference type="ChEBI" id="CHEBI:57945"/>
        <dbReference type="EC" id="7.1.1.2"/>
    </reaction>
    <physiologicalReaction direction="left-to-right" evidence="2">
        <dbReference type="Rhea" id="RHEA:29092"/>
    </physiologicalReaction>
</comment>
<comment type="cofactor">
    <cofactor evidence="2">
        <name>[2Fe-2S] cluster</name>
        <dbReference type="ChEBI" id="CHEBI:190135"/>
    </cofactor>
    <text evidence="2">Binds 1 [2Fe-2S] cluster.</text>
</comment>
<comment type="subunit">
    <text evidence="1">Core subunit of respiratory chain NADH dehydrogenase (Complex I) which is composed of 45 different subunits. This is a component of the flavoprotein-sulfur (FP) fragment of the enzyme (By similarity).</text>
</comment>
<comment type="subcellular location">
    <subcellularLocation>
        <location evidence="1">Mitochondrion inner membrane</location>
        <topology evidence="1">Peripheral membrane protein</topology>
        <orientation evidence="1">Matrix side</orientation>
    </subcellularLocation>
</comment>
<comment type="similarity">
    <text evidence="6">Belongs to the complex I 24 kDa subunit family.</text>
</comment>